<accession>O04847</accession>
<proteinExistence type="evidence at protein level"/>
<protein>
    <recommendedName>
        <fullName evidence="6">Deacetoxyvindoline 4-hydroxylase</fullName>
        <ecNumber evidence="4 5">1.14.11.20</ecNumber>
    </recommendedName>
</protein>
<gene>
    <name evidence="6" type="primary">D4H</name>
</gene>
<organism>
    <name type="scientific">Catharanthus roseus</name>
    <name type="common">Madagascar periwinkle</name>
    <name type="synonym">Vinca rosea</name>
    <dbReference type="NCBI Taxonomy" id="4058"/>
    <lineage>
        <taxon>Eukaryota</taxon>
        <taxon>Viridiplantae</taxon>
        <taxon>Streptophyta</taxon>
        <taxon>Embryophyta</taxon>
        <taxon>Tracheophyta</taxon>
        <taxon>Spermatophyta</taxon>
        <taxon>Magnoliopsida</taxon>
        <taxon>eudicotyledons</taxon>
        <taxon>Gunneridae</taxon>
        <taxon>Pentapetalae</taxon>
        <taxon>asterids</taxon>
        <taxon>lamiids</taxon>
        <taxon>Gentianales</taxon>
        <taxon>Apocynaceae</taxon>
        <taxon>Rauvolfioideae</taxon>
        <taxon>Vinceae</taxon>
        <taxon>Catharanthinae</taxon>
        <taxon>Catharanthus</taxon>
    </lineage>
</organism>
<reference key="1">
    <citation type="journal article" date="1997" name="Plant Mol. Biol.">
        <title>Molecular cloning and characterization of desacetoxyvindoline-4-hydroxylase, a 2-oxoglutarate dependent-dioxygenase involved in the biosynthesis of vindoline in Catharanthus roseus (L.) G. Don.</title>
        <authorList>
            <person name="Vazquez-Flota F."/>
            <person name="De Carolis E."/>
            <person name="Alarco A.-M."/>
            <person name="De Luca V."/>
        </authorList>
    </citation>
    <scope>NUCLEOTIDE SEQUENCE [GENOMIC DNA / MRNA]</scope>
    <scope>PROTEIN SEQUENCE OF 28-44; 120-137 AND 361-373</scope>
    <scope>CATALYTIC ACTIVITY</scope>
    <source>
        <strain>cv. Little Delicata</strain>
        <tissue>Seedling</tissue>
    </source>
</reference>
<reference key="2">
    <citation type="journal article" date="1993" name="J. Biol. Chem.">
        <title>Purification, characterization, and kinetic analysis of a 2-oxoglutarate-dependent dioxygenase involved in vindoline biosynthesis from Catharanthus roseus.</title>
        <authorList>
            <person name="De Carolis E."/>
            <person name="De Luca V."/>
        </authorList>
    </citation>
    <scope>CATALYTIC ACTIVITY</scope>
    <scope>CHARACTERIZATION</scope>
    <scope>COFACTOR</scope>
    <scope>SUBUNIT</scope>
    <source>
        <tissue>Apical bud</tissue>
        <tissue>Leaf</tissue>
    </source>
</reference>
<reference key="3">
    <citation type="journal article" date="1990" name="Plant Physiol.">
        <title>Isolation and characterization of a 2-oxoglutarate dependent dioxygenase involved in the second-to-last step in vindoline biosynthesis.</title>
        <authorList>
            <person name="De Carolis E."/>
            <person name="Chan F."/>
            <person name="Balsevich J."/>
            <person name="De Luca V."/>
        </authorList>
    </citation>
    <scope>CHARACTERIZATION</scope>
    <scope>DEVELOPMENTAL STAGE</scope>
    <scope>INDUCTION</scope>
    <source>
        <tissue>Leaf</tissue>
        <tissue>Shoot apex</tissue>
    </source>
</reference>
<reference key="4">
    <citation type="journal article" date="2011" name="J. Plant Physiol.">
        <title>Spatial organization of the vindoline biosynthetic pathway in Catharanthus roseus.</title>
        <authorList>
            <person name="Guirimand G."/>
            <person name="Guihur A."/>
            <person name="Poutrain P."/>
            <person name="Hericourt F."/>
            <person name="Mahroug S."/>
            <person name="St-Pierre B."/>
            <person name="Burlat V."/>
            <person name="Courdavault V."/>
        </authorList>
    </citation>
    <scope>SUBCELLULAR LOCATION</scope>
    <scope>SUBUNIT</scope>
</reference>
<sequence>MPKSWPIVISSHSFCFLPNSEQERKMKDLNFHAATLSEEESLRELKAFDETKAGVKGIVDTGITKIPRIFIDQPKNLDRISVCRGKSDIKIPVINLNGLSSNSEIRREIVEKIGEASEKYGFFQIVNHGIPQDVMDKMVDGVRKFHEQDDQIKRQYYSRDRFNKNFLYSSNYVLIPGIACNWRDTMECIMNSNQPDPQEFPDVCRDILMKYSNYVRNLGLILFELLSEALGLKPNHLEEMDCAEGLILLGHYYPACPQPELTFGTSKHSDSGFLTILMQDQIGGLQILLENQWIDVPFIPGALVINIADLLQLITNDKFKSVEHRVLANKVGPRISVAVAFGIKTQTQEGVSPRLYGPIKELISEENPPIYKEVTVKDFITIRFAKRFDDSSSLSPFRLNN</sequence>
<name>DV4H_CATRO</name>
<keyword id="KW-0017">Alkaloid metabolism</keyword>
<keyword id="KW-0963">Cytoplasm</keyword>
<keyword id="KW-0223">Dioxygenase</keyword>
<keyword id="KW-0903">Direct protein sequencing</keyword>
<keyword id="KW-0408">Iron</keyword>
<keyword id="KW-0479">Metal-binding</keyword>
<keyword id="KW-0539">Nucleus</keyword>
<keyword id="KW-0560">Oxidoreductase</keyword>
<keyword id="KW-0847">Vitamin C</keyword>
<dbReference type="EC" id="1.14.11.20" evidence="4 5"/>
<dbReference type="EMBL" id="AF008597">
    <property type="protein sequence ID" value="AAB97311.1"/>
    <property type="molecule type" value="Genomic_DNA"/>
</dbReference>
<dbReference type="EMBL" id="U71604">
    <property type="protein sequence ID" value="AAC49826.1"/>
    <property type="molecule type" value="mRNA"/>
</dbReference>
<dbReference type="EMBL" id="U71605">
    <property type="protein sequence ID" value="AAC49827.1"/>
    <property type="molecule type" value="mRNA"/>
</dbReference>
<dbReference type="PIR" id="T07914">
    <property type="entry name" value="T07914"/>
</dbReference>
<dbReference type="SMR" id="O04847"/>
<dbReference type="KEGG" id="ag:AAB97311"/>
<dbReference type="BRENDA" id="1.14.11.20">
    <property type="organism ID" value="1211"/>
</dbReference>
<dbReference type="UniPathway" id="UPA00365"/>
<dbReference type="GO" id="GO:0005737">
    <property type="term" value="C:cytoplasm"/>
    <property type="evidence" value="ECO:0007669"/>
    <property type="project" value="UniProtKB-SubCell"/>
</dbReference>
<dbReference type="GO" id="GO:0005634">
    <property type="term" value="C:nucleus"/>
    <property type="evidence" value="ECO:0007669"/>
    <property type="project" value="UniProtKB-SubCell"/>
</dbReference>
<dbReference type="GO" id="GO:0050590">
    <property type="term" value="F:desacetoxyvindoline 4-hydroxylase activity"/>
    <property type="evidence" value="ECO:0007669"/>
    <property type="project" value="UniProtKB-EC"/>
</dbReference>
<dbReference type="GO" id="GO:0031418">
    <property type="term" value="F:L-ascorbic acid binding"/>
    <property type="evidence" value="ECO:0007669"/>
    <property type="project" value="UniProtKB-KW"/>
</dbReference>
<dbReference type="GO" id="GO:0046872">
    <property type="term" value="F:metal ion binding"/>
    <property type="evidence" value="ECO:0007669"/>
    <property type="project" value="UniProtKB-KW"/>
</dbReference>
<dbReference type="GO" id="GO:0009820">
    <property type="term" value="P:alkaloid metabolic process"/>
    <property type="evidence" value="ECO:0007669"/>
    <property type="project" value="UniProtKB-KW"/>
</dbReference>
<dbReference type="GO" id="GO:0009805">
    <property type="term" value="P:coumarin biosynthetic process"/>
    <property type="evidence" value="ECO:0007669"/>
    <property type="project" value="UniProtKB-ARBA"/>
</dbReference>
<dbReference type="GO" id="GO:0002238">
    <property type="term" value="P:response to molecule of fungal origin"/>
    <property type="evidence" value="ECO:0007669"/>
    <property type="project" value="UniProtKB-ARBA"/>
</dbReference>
<dbReference type="FunFam" id="2.60.120.330:FF:000005">
    <property type="entry name" value="1-aminocyclopropane-1-carboxylate oxidase homolog 1"/>
    <property type="match status" value="1"/>
</dbReference>
<dbReference type="Gene3D" id="2.60.120.330">
    <property type="entry name" value="B-lactam Antibiotic, Isopenicillin N Synthase, Chain"/>
    <property type="match status" value="1"/>
</dbReference>
<dbReference type="InterPro" id="IPR026992">
    <property type="entry name" value="DIOX_N"/>
</dbReference>
<dbReference type="InterPro" id="IPR044861">
    <property type="entry name" value="IPNS-like_FE2OG_OXY"/>
</dbReference>
<dbReference type="InterPro" id="IPR027443">
    <property type="entry name" value="IPNS-like_sf"/>
</dbReference>
<dbReference type="InterPro" id="IPR005123">
    <property type="entry name" value="Oxoglu/Fe-dep_dioxygenase_dom"/>
</dbReference>
<dbReference type="PANTHER" id="PTHR10209:SF884">
    <property type="entry name" value="1-AMINOCYCLOPROPANE-1-CARBOXYLATE OXIDASE HOMOLOG 1-LIKE"/>
    <property type="match status" value="1"/>
</dbReference>
<dbReference type="PANTHER" id="PTHR10209">
    <property type="entry name" value="OXIDOREDUCTASE, 2OG-FE II OXYGENASE FAMILY PROTEIN"/>
    <property type="match status" value="1"/>
</dbReference>
<dbReference type="Pfam" id="PF03171">
    <property type="entry name" value="2OG-FeII_Oxy"/>
    <property type="match status" value="1"/>
</dbReference>
<dbReference type="Pfam" id="PF14226">
    <property type="entry name" value="DIOX_N"/>
    <property type="match status" value="1"/>
</dbReference>
<dbReference type="SUPFAM" id="SSF51197">
    <property type="entry name" value="Clavaminate synthase-like"/>
    <property type="match status" value="1"/>
</dbReference>
<dbReference type="PROSITE" id="PS51471">
    <property type="entry name" value="FE2OG_OXY"/>
    <property type="match status" value="1"/>
</dbReference>
<comment type="function">
    <text>Catalyzes the C4-hydroxylation of desacetoxyvindoline.</text>
</comment>
<comment type="catalytic activity">
    <reaction evidence="4 5">
        <text>deacetoxyvindoline + 2-oxoglutarate + O2 = 4-O-deacetylvindoline + succinate + CO2</text>
        <dbReference type="Rhea" id="RHEA:18973"/>
        <dbReference type="ChEBI" id="CHEBI:15379"/>
        <dbReference type="ChEBI" id="CHEBI:16526"/>
        <dbReference type="ChEBI" id="CHEBI:16810"/>
        <dbReference type="ChEBI" id="CHEBI:30031"/>
        <dbReference type="ChEBI" id="CHEBI:57965"/>
        <dbReference type="ChEBI" id="CHEBI:58461"/>
        <dbReference type="EC" id="1.14.11.20"/>
    </reaction>
</comment>
<comment type="cofactor">
    <cofactor evidence="4">
        <name>Fe cation</name>
        <dbReference type="ChEBI" id="CHEBI:24875"/>
    </cofactor>
    <text evidence="1">Binds 1 Fe(2+) ion per subunit.</text>
</comment>
<comment type="cofactor">
    <cofactor>
        <name>L-ascorbate</name>
        <dbReference type="ChEBI" id="CHEBI:38290"/>
    </cofactor>
</comment>
<comment type="pathway">
    <text>Alkaloid biosynthesis; vindoline biosynthesis.</text>
</comment>
<comment type="subunit">
    <text evidence="3 8">Monomer.</text>
</comment>
<comment type="subcellular location">
    <subcellularLocation>
        <location evidence="3">Cytoplasm</location>
    </subcellularLocation>
    <subcellularLocation>
        <location evidence="3">Nucleus</location>
    </subcellularLocation>
</comment>
<comment type="tissue specificity">
    <text>Highest levels in leaves, lower levels in stems and fruits. Not expressed in flowers and roots.</text>
</comment>
<comment type="induction">
    <text evidence="2">By light.</text>
</comment>
<comment type="similarity">
    <text evidence="7">Belongs to the iron/ascorbate-dependent oxidoreductase family.</text>
</comment>
<evidence type="ECO:0000255" key="1">
    <source>
        <dbReference type="PROSITE-ProRule" id="PRU00805"/>
    </source>
</evidence>
<evidence type="ECO:0000269" key="2">
    <source>
    </source>
</evidence>
<evidence type="ECO:0000269" key="3">
    <source>
    </source>
</evidence>
<evidence type="ECO:0000269" key="4">
    <source>
    </source>
</evidence>
<evidence type="ECO:0000269" key="5">
    <source>
    </source>
</evidence>
<evidence type="ECO:0000303" key="6">
    <source>
    </source>
</evidence>
<evidence type="ECO:0000305" key="7"/>
<evidence type="ECO:0000305" key="8">
    <source>
    </source>
</evidence>
<feature type="chain" id="PRO_0000067282" description="Deacetoxyvindoline 4-hydroxylase">
    <location>
        <begin position="1"/>
        <end position="401"/>
    </location>
</feature>
<feature type="domain" description="Fe2OG dioxygenase" evidence="1">
    <location>
        <begin position="242"/>
        <end position="345"/>
    </location>
</feature>
<feature type="binding site" evidence="1">
    <location>
        <position position="268"/>
    </location>
    <ligand>
        <name>Fe cation</name>
        <dbReference type="ChEBI" id="CHEBI:24875"/>
    </ligand>
</feature>
<feature type="binding site" evidence="1">
    <location>
        <position position="270"/>
    </location>
    <ligand>
        <name>Fe cation</name>
        <dbReference type="ChEBI" id="CHEBI:24875"/>
    </ligand>
</feature>
<feature type="binding site" evidence="1">
    <location>
        <position position="324"/>
    </location>
    <ligand>
        <name>Fe cation</name>
        <dbReference type="ChEBI" id="CHEBI:24875"/>
    </ligand>
</feature>
<feature type="binding site" evidence="1">
    <location>
        <position position="334"/>
    </location>
    <ligand>
        <name>2-oxoglutarate</name>
        <dbReference type="ChEBI" id="CHEBI:16810"/>
    </ligand>
</feature>
<feature type="sequence conflict" description="In Ref. 1; AA sequence." evidence="7" ref="1">
    <original>D</original>
    <variation>A</variation>
    <location>
        <position position="136"/>
    </location>
</feature>